<gene>
    <name type="ordered locus">SH1944</name>
</gene>
<feature type="chain" id="PRO_0000299348" description="Putative phosphoesterase SH1944">
    <location>
        <begin position="1"/>
        <end position="169"/>
    </location>
</feature>
<feature type="short sequence motif" description="HXTX 1" evidence="1">
    <location>
        <begin position="34"/>
        <end position="37"/>
    </location>
</feature>
<feature type="short sequence motif" description="HXTX 2" evidence="1">
    <location>
        <begin position="115"/>
        <end position="118"/>
    </location>
</feature>
<feature type="active site" description="Proton donor" evidence="1">
    <location>
        <position position="34"/>
    </location>
</feature>
<feature type="active site" description="Proton acceptor" evidence="1">
    <location>
        <position position="115"/>
    </location>
</feature>
<evidence type="ECO:0000255" key="1">
    <source>
        <dbReference type="HAMAP-Rule" id="MF_01444"/>
    </source>
</evidence>
<name>Y1944_STAHJ</name>
<proteinExistence type="inferred from homology"/>
<organism>
    <name type="scientific">Staphylococcus haemolyticus (strain JCSC1435)</name>
    <dbReference type="NCBI Taxonomy" id="279808"/>
    <lineage>
        <taxon>Bacteria</taxon>
        <taxon>Bacillati</taxon>
        <taxon>Bacillota</taxon>
        <taxon>Bacilli</taxon>
        <taxon>Bacillales</taxon>
        <taxon>Staphylococcaceae</taxon>
        <taxon>Staphylococcus</taxon>
    </lineage>
</organism>
<sequence>MNIGLALIPSKSFQDEVNGYRKRYDTEYARIMPHITIKSHFEINDDELDSVKEEVKKRLEGFGPVDVHATKASSFKPTNNVIYFKVAKTDELEQLFNLFNTEDFHGEAEHPFVPHFTIAQGLTSQEFEDIFGQVELVGVDLKEKIEELSLLRYDEEEDKWKVIDTFKLA</sequence>
<comment type="similarity">
    <text evidence="1">Belongs to the 2H phosphoesterase superfamily. YjcG family.</text>
</comment>
<reference key="1">
    <citation type="journal article" date="2005" name="J. Bacteriol.">
        <title>Whole-genome sequencing of Staphylococcus haemolyticus uncovers the extreme plasticity of its genome and the evolution of human-colonizing staphylococcal species.</title>
        <authorList>
            <person name="Takeuchi F."/>
            <person name="Watanabe S."/>
            <person name="Baba T."/>
            <person name="Yuzawa H."/>
            <person name="Ito T."/>
            <person name="Morimoto Y."/>
            <person name="Kuroda M."/>
            <person name="Cui L."/>
            <person name="Takahashi M."/>
            <person name="Ankai A."/>
            <person name="Baba S."/>
            <person name="Fukui S."/>
            <person name="Lee J.C."/>
            <person name="Hiramatsu K."/>
        </authorList>
    </citation>
    <scope>NUCLEOTIDE SEQUENCE [LARGE SCALE GENOMIC DNA]</scope>
    <source>
        <strain>JCSC1435</strain>
    </source>
</reference>
<protein>
    <recommendedName>
        <fullName evidence="1">Putative phosphoesterase SH1944</fullName>
        <ecNumber evidence="1">3.1.-.-</ecNumber>
    </recommendedName>
</protein>
<accession>Q4L522</accession>
<keyword id="KW-0378">Hydrolase</keyword>
<dbReference type="EC" id="3.1.-.-" evidence="1"/>
<dbReference type="EMBL" id="AP006716">
    <property type="protein sequence ID" value="BAE05253.1"/>
    <property type="molecule type" value="Genomic_DNA"/>
</dbReference>
<dbReference type="RefSeq" id="WP_011276214.1">
    <property type="nucleotide sequence ID" value="NC_007168.1"/>
</dbReference>
<dbReference type="SMR" id="Q4L522"/>
<dbReference type="KEGG" id="sha:SH1944"/>
<dbReference type="eggNOG" id="COG1514">
    <property type="taxonomic scope" value="Bacteria"/>
</dbReference>
<dbReference type="HOGENOM" id="CLU_132020_0_0_9"/>
<dbReference type="OrthoDB" id="1524661at2"/>
<dbReference type="Proteomes" id="UP000000543">
    <property type="component" value="Chromosome"/>
</dbReference>
<dbReference type="GO" id="GO:0016788">
    <property type="term" value="F:hydrolase activity, acting on ester bonds"/>
    <property type="evidence" value="ECO:0007669"/>
    <property type="project" value="UniProtKB-UniRule"/>
</dbReference>
<dbReference type="Gene3D" id="3.90.1140.10">
    <property type="entry name" value="Cyclic phosphodiesterase"/>
    <property type="match status" value="1"/>
</dbReference>
<dbReference type="HAMAP" id="MF_01444">
    <property type="entry name" value="2H_phosphoesterase_YjcG"/>
    <property type="match status" value="1"/>
</dbReference>
<dbReference type="InterPro" id="IPR050580">
    <property type="entry name" value="2H_phosphoesterase_YjcG-like"/>
</dbReference>
<dbReference type="InterPro" id="IPR009097">
    <property type="entry name" value="Cyclic_Pdiesterase"/>
</dbReference>
<dbReference type="InterPro" id="IPR022932">
    <property type="entry name" value="YjcG"/>
</dbReference>
<dbReference type="NCBIfam" id="NF010223">
    <property type="entry name" value="PRK13679.1"/>
    <property type="match status" value="1"/>
</dbReference>
<dbReference type="PANTHER" id="PTHR40037:SF1">
    <property type="entry name" value="PHOSPHOESTERASE SAOUHSC_00951-RELATED"/>
    <property type="match status" value="1"/>
</dbReference>
<dbReference type="PANTHER" id="PTHR40037">
    <property type="entry name" value="PHOSPHOESTERASE YJCG-RELATED"/>
    <property type="match status" value="1"/>
</dbReference>
<dbReference type="Pfam" id="PF13563">
    <property type="entry name" value="2_5_RNA_ligase2"/>
    <property type="match status" value="1"/>
</dbReference>
<dbReference type="SUPFAM" id="SSF55144">
    <property type="entry name" value="LigT-like"/>
    <property type="match status" value="1"/>
</dbReference>